<feature type="chain" id="PRO_0000346630" description="Nucleoid occlusion protein">
    <location>
        <begin position="1"/>
        <end position="281"/>
    </location>
</feature>
<feature type="DNA-binding region" description="H-T-H motif" evidence="1">
    <location>
        <begin position="145"/>
        <end position="164"/>
    </location>
</feature>
<feature type="region of interest" description="Disordered" evidence="2">
    <location>
        <begin position="1"/>
        <end position="26"/>
    </location>
</feature>
<feature type="compositionally biased region" description="Basic and acidic residues" evidence="2">
    <location>
        <begin position="12"/>
        <end position="26"/>
    </location>
</feature>
<accession>A4ITW8</accession>
<organism>
    <name type="scientific">Geobacillus thermodenitrificans (strain NG80-2)</name>
    <dbReference type="NCBI Taxonomy" id="420246"/>
    <lineage>
        <taxon>Bacteria</taxon>
        <taxon>Bacillati</taxon>
        <taxon>Bacillota</taxon>
        <taxon>Bacilli</taxon>
        <taxon>Bacillales</taxon>
        <taxon>Anoxybacillaceae</taxon>
        <taxon>Geobacillus</taxon>
    </lineage>
</organism>
<gene>
    <name evidence="1" type="primary">noc</name>
    <name type="ordered locus">GTNG_3437</name>
</gene>
<sequence length="281" mass="32418">MKHPFSRLFSFGEKEQEEAGGKQEREEVRNIPVASIIPNRFQPRTVFDEEKIAELALTIRTHGIIQPIVVRECDNGQFEIIAGERRWRAVQKLGWTEIPAIIKNLNDKETASVALIENLQREELTPIEEAMAYARLIELHDLTQEALAQRLGKGQSTIANKLRLLKLPQEVQEALLQRAITERHARALIALKDKEKQLKLLQEIIDKQLNVKQTEDRVLKMLEAGERKPKPKRKAFSRDMRIAVNTIRQSLSMVENSGVSVHSEEEEFDDYYQITIRIAKK</sequence>
<keyword id="KW-0131">Cell cycle</keyword>
<keyword id="KW-0132">Cell division</keyword>
<keyword id="KW-0963">Cytoplasm</keyword>
<keyword id="KW-0238">DNA-binding</keyword>
<keyword id="KW-0717">Septation</keyword>
<reference key="1">
    <citation type="journal article" date="2007" name="Proc. Natl. Acad. Sci. U.S.A.">
        <title>Genome and proteome of long-chain alkane degrading Geobacillus thermodenitrificans NG80-2 isolated from a deep-subsurface oil reservoir.</title>
        <authorList>
            <person name="Feng L."/>
            <person name="Wang W."/>
            <person name="Cheng J."/>
            <person name="Ren Y."/>
            <person name="Zhao G."/>
            <person name="Gao C."/>
            <person name="Tang Y."/>
            <person name="Liu X."/>
            <person name="Han W."/>
            <person name="Peng X."/>
            <person name="Liu R."/>
            <person name="Wang L."/>
        </authorList>
    </citation>
    <scope>NUCLEOTIDE SEQUENCE [LARGE SCALE GENOMIC DNA]</scope>
    <source>
        <strain>NG80-2</strain>
    </source>
</reference>
<dbReference type="EMBL" id="CP000557">
    <property type="protein sequence ID" value="ABO68772.1"/>
    <property type="molecule type" value="Genomic_DNA"/>
</dbReference>
<dbReference type="RefSeq" id="WP_008880825.1">
    <property type="nucleotide sequence ID" value="NC_009328.1"/>
</dbReference>
<dbReference type="SMR" id="A4ITW8"/>
<dbReference type="KEGG" id="gtn:GTNG_3437"/>
<dbReference type="eggNOG" id="COG1475">
    <property type="taxonomic scope" value="Bacteria"/>
</dbReference>
<dbReference type="HOGENOM" id="CLU_023853_0_1_9"/>
<dbReference type="Proteomes" id="UP000001578">
    <property type="component" value="Chromosome"/>
</dbReference>
<dbReference type="GO" id="GO:0005694">
    <property type="term" value="C:chromosome"/>
    <property type="evidence" value="ECO:0007669"/>
    <property type="project" value="TreeGrafter"/>
</dbReference>
<dbReference type="GO" id="GO:0005737">
    <property type="term" value="C:cytoplasm"/>
    <property type="evidence" value="ECO:0007669"/>
    <property type="project" value="UniProtKB-UniRule"/>
</dbReference>
<dbReference type="GO" id="GO:0009295">
    <property type="term" value="C:nucleoid"/>
    <property type="evidence" value="ECO:0007669"/>
    <property type="project" value="UniProtKB-SubCell"/>
</dbReference>
<dbReference type="GO" id="GO:0003677">
    <property type="term" value="F:DNA binding"/>
    <property type="evidence" value="ECO:0007669"/>
    <property type="project" value="UniProtKB-UniRule"/>
</dbReference>
<dbReference type="GO" id="GO:0007059">
    <property type="term" value="P:chromosome segregation"/>
    <property type="evidence" value="ECO:0007669"/>
    <property type="project" value="TreeGrafter"/>
</dbReference>
<dbReference type="GO" id="GO:0000917">
    <property type="term" value="P:division septum assembly"/>
    <property type="evidence" value="ECO:0007669"/>
    <property type="project" value="UniProtKB-KW"/>
</dbReference>
<dbReference type="GO" id="GO:0045881">
    <property type="term" value="P:positive regulation of sporulation resulting in formation of a cellular spore"/>
    <property type="evidence" value="ECO:0007669"/>
    <property type="project" value="TreeGrafter"/>
</dbReference>
<dbReference type="CDD" id="cd16393">
    <property type="entry name" value="SPO0J_N"/>
    <property type="match status" value="1"/>
</dbReference>
<dbReference type="FunFam" id="1.10.10.2830:FF:000001">
    <property type="entry name" value="Chromosome partitioning protein ParB"/>
    <property type="match status" value="1"/>
</dbReference>
<dbReference type="FunFam" id="3.90.1530.30:FF:000001">
    <property type="entry name" value="Chromosome partitioning protein ParB"/>
    <property type="match status" value="1"/>
</dbReference>
<dbReference type="Gene3D" id="1.10.10.2830">
    <property type="match status" value="1"/>
</dbReference>
<dbReference type="Gene3D" id="3.90.1530.30">
    <property type="match status" value="1"/>
</dbReference>
<dbReference type="HAMAP" id="MF_02015">
    <property type="entry name" value="ParB_Noc"/>
    <property type="match status" value="1"/>
</dbReference>
<dbReference type="InterPro" id="IPR050336">
    <property type="entry name" value="Chromosome_partition/occlusion"/>
</dbReference>
<dbReference type="InterPro" id="IPR041468">
    <property type="entry name" value="HTH_ParB/Spo0J"/>
</dbReference>
<dbReference type="InterPro" id="IPR023705">
    <property type="entry name" value="Nucleoid_occlusion_protein"/>
</dbReference>
<dbReference type="InterPro" id="IPR004437">
    <property type="entry name" value="ParB/RepB/Spo0J"/>
</dbReference>
<dbReference type="InterPro" id="IPR003115">
    <property type="entry name" value="ParB/Sulfiredoxin_dom"/>
</dbReference>
<dbReference type="InterPro" id="IPR036086">
    <property type="entry name" value="ParB/Sulfiredoxin_sf"/>
</dbReference>
<dbReference type="NCBIfam" id="TIGR04285">
    <property type="entry name" value="nucleoid_noc"/>
    <property type="match status" value="1"/>
</dbReference>
<dbReference type="NCBIfam" id="TIGR00180">
    <property type="entry name" value="parB_part"/>
    <property type="match status" value="1"/>
</dbReference>
<dbReference type="PANTHER" id="PTHR33375">
    <property type="entry name" value="CHROMOSOME-PARTITIONING PROTEIN PARB-RELATED"/>
    <property type="match status" value="1"/>
</dbReference>
<dbReference type="PANTHER" id="PTHR33375:SF8">
    <property type="entry name" value="NUCLEOID OCCLUSION PROTEIN"/>
    <property type="match status" value="1"/>
</dbReference>
<dbReference type="Pfam" id="PF17762">
    <property type="entry name" value="HTH_ParB"/>
    <property type="match status" value="1"/>
</dbReference>
<dbReference type="Pfam" id="PF02195">
    <property type="entry name" value="ParBc"/>
    <property type="match status" value="1"/>
</dbReference>
<dbReference type="SMART" id="SM00470">
    <property type="entry name" value="ParB"/>
    <property type="match status" value="1"/>
</dbReference>
<dbReference type="SUPFAM" id="SSF109709">
    <property type="entry name" value="KorB DNA-binding domain-like"/>
    <property type="match status" value="1"/>
</dbReference>
<dbReference type="SUPFAM" id="SSF110849">
    <property type="entry name" value="ParB/Sulfiredoxin"/>
    <property type="match status" value="1"/>
</dbReference>
<evidence type="ECO:0000255" key="1">
    <source>
        <dbReference type="HAMAP-Rule" id="MF_02015"/>
    </source>
</evidence>
<evidence type="ECO:0000256" key="2">
    <source>
        <dbReference type="SAM" id="MobiDB-lite"/>
    </source>
</evidence>
<name>NOC_GEOTN</name>
<protein>
    <recommendedName>
        <fullName evidence="1">Nucleoid occlusion protein</fullName>
        <shortName evidence="1">Noc</shortName>
    </recommendedName>
</protein>
<proteinExistence type="inferred from homology"/>
<comment type="function">
    <text evidence="1">Effects nucleoid occlusion by binding relatively nonspecifically to DNA and preventing the assembly of the division machinery in the vicinity of the nucleoid, especially under conditions that disturb the cell cycle. It helps to coordinate cell division and chromosome segregation by preventing the formation of the Z ring through the nucleoid, which would cause chromosome breakage.</text>
</comment>
<comment type="subcellular location">
    <subcellularLocation>
        <location evidence="1">Cytoplasm</location>
        <location evidence="1">Nucleoid</location>
    </subcellularLocation>
</comment>
<comment type="similarity">
    <text evidence="1">Belongs to the ParB family.</text>
</comment>